<reference key="1">
    <citation type="journal article" date="2006" name="PLoS Biol.">
        <title>Metabolic complementarity and genomics of the dual bacterial symbiosis of sharpshooters.</title>
        <authorList>
            <person name="Wu D."/>
            <person name="Daugherty S.C."/>
            <person name="Van Aken S.E."/>
            <person name="Pai G.H."/>
            <person name="Watkins K.L."/>
            <person name="Khouri H."/>
            <person name="Tallon L.J."/>
            <person name="Zaborsky J.M."/>
            <person name="Dunbar H.E."/>
            <person name="Tran P.L."/>
            <person name="Moran N.A."/>
            <person name="Eisen J.A."/>
        </authorList>
    </citation>
    <scope>NUCLEOTIDE SEQUENCE [LARGE SCALE GENOMIC DNA]</scope>
</reference>
<feature type="chain" id="PRO_0000377083" description="tRNA dimethylallyltransferase">
    <location>
        <begin position="1"/>
        <end position="309"/>
    </location>
</feature>
<feature type="region of interest" description="Interaction with substrate tRNA" evidence="1">
    <location>
        <begin position="35"/>
        <end position="38"/>
    </location>
</feature>
<feature type="region of interest" description="Interaction with substrate tRNA" evidence="1">
    <location>
        <begin position="240"/>
        <end position="245"/>
    </location>
</feature>
<feature type="binding site" evidence="1">
    <location>
        <begin position="10"/>
        <end position="17"/>
    </location>
    <ligand>
        <name>ATP</name>
        <dbReference type="ChEBI" id="CHEBI:30616"/>
    </ligand>
</feature>
<feature type="binding site" evidence="1">
    <location>
        <begin position="12"/>
        <end position="17"/>
    </location>
    <ligand>
        <name>substrate</name>
    </ligand>
</feature>
<feature type="site" description="Interaction with substrate tRNA" evidence="1">
    <location>
        <position position="101"/>
    </location>
</feature>
<feature type="site" description="Interaction with substrate tRNA" evidence="1">
    <location>
        <position position="123"/>
    </location>
</feature>
<evidence type="ECO:0000255" key="1">
    <source>
        <dbReference type="HAMAP-Rule" id="MF_00185"/>
    </source>
</evidence>
<accession>Q1LSQ3</accession>
<comment type="function">
    <text evidence="1">Catalyzes the transfer of a dimethylallyl group onto the adenine at position 37 in tRNAs that read codons beginning with uridine, leading to the formation of N6-(dimethylallyl)adenosine (i(6)A).</text>
</comment>
<comment type="catalytic activity">
    <reaction evidence="1">
        <text>adenosine(37) in tRNA + dimethylallyl diphosphate = N(6)-dimethylallyladenosine(37) in tRNA + diphosphate</text>
        <dbReference type="Rhea" id="RHEA:26482"/>
        <dbReference type="Rhea" id="RHEA-COMP:10162"/>
        <dbReference type="Rhea" id="RHEA-COMP:10375"/>
        <dbReference type="ChEBI" id="CHEBI:33019"/>
        <dbReference type="ChEBI" id="CHEBI:57623"/>
        <dbReference type="ChEBI" id="CHEBI:74411"/>
        <dbReference type="ChEBI" id="CHEBI:74415"/>
        <dbReference type="EC" id="2.5.1.75"/>
    </reaction>
</comment>
<comment type="cofactor">
    <cofactor evidence="1">
        <name>Mg(2+)</name>
        <dbReference type="ChEBI" id="CHEBI:18420"/>
    </cofactor>
</comment>
<comment type="subunit">
    <text evidence="1">Monomer.</text>
</comment>
<comment type="similarity">
    <text evidence="1">Belongs to the IPP transferase family.</text>
</comment>
<name>MIAA_BAUCH</name>
<organism>
    <name type="scientific">Baumannia cicadellinicola subsp. Homalodisca coagulata</name>
    <dbReference type="NCBI Taxonomy" id="374463"/>
    <lineage>
        <taxon>Bacteria</taxon>
        <taxon>Pseudomonadati</taxon>
        <taxon>Pseudomonadota</taxon>
        <taxon>Gammaproteobacteria</taxon>
        <taxon>Candidatus Palibaumannia</taxon>
    </lineage>
</organism>
<gene>
    <name evidence="1" type="primary">miaA</name>
    <name type="ordered locus">BCI_0583</name>
</gene>
<dbReference type="EC" id="2.5.1.75" evidence="1"/>
<dbReference type="EMBL" id="CP000238">
    <property type="protein sequence ID" value="ABF14037.1"/>
    <property type="molecule type" value="Genomic_DNA"/>
</dbReference>
<dbReference type="RefSeq" id="WP_011520744.1">
    <property type="nucleotide sequence ID" value="NC_007984.1"/>
</dbReference>
<dbReference type="SMR" id="Q1LSQ3"/>
<dbReference type="STRING" id="374463.BCI_0583"/>
<dbReference type="KEGG" id="bci:BCI_0583"/>
<dbReference type="HOGENOM" id="CLU_032616_0_0_6"/>
<dbReference type="OrthoDB" id="9776390at2"/>
<dbReference type="Proteomes" id="UP000002427">
    <property type="component" value="Chromosome"/>
</dbReference>
<dbReference type="GO" id="GO:0005524">
    <property type="term" value="F:ATP binding"/>
    <property type="evidence" value="ECO:0007669"/>
    <property type="project" value="UniProtKB-UniRule"/>
</dbReference>
<dbReference type="GO" id="GO:0052381">
    <property type="term" value="F:tRNA dimethylallyltransferase activity"/>
    <property type="evidence" value="ECO:0007669"/>
    <property type="project" value="UniProtKB-UniRule"/>
</dbReference>
<dbReference type="GO" id="GO:0006400">
    <property type="term" value="P:tRNA modification"/>
    <property type="evidence" value="ECO:0007669"/>
    <property type="project" value="TreeGrafter"/>
</dbReference>
<dbReference type="FunFam" id="1.10.20.140:FF:000001">
    <property type="entry name" value="tRNA dimethylallyltransferase"/>
    <property type="match status" value="1"/>
</dbReference>
<dbReference type="Gene3D" id="1.10.20.140">
    <property type="match status" value="1"/>
</dbReference>
<dbReference type="Gene3D" id="3.40.50.300">
    <property type="entry name" value="P-loop containing nucleotide triphosphate hydrolases"/>
    <property type="match status" value="1"/>
</dbReference>
<dbReference type="HAMAP" id="MF_00185">
    <property type="entry name" value="IPP_trans"/>
    <property type="match status" value="1"/>
</dbReference>
<dbReference type="InterPro" id="IPR039657">
    <property type="entry name" value="Dimethylallyltransferase"/>
</dbReference>
<dbReference type="InterPro" id="IPR018022">
    <property type="entry name" value="IPT"/>
</dbReference>
<dbReference type="InterPro" id="IPR027417">
    <property type="entry name" value="P-loop_NTPase"/>
</dbReference>
<dbReference type="NCBIfam" id="TIGR00174">
    <property type="entry name" value="miaA"/>
    <property type="match status" value="1"/>
</dbReference>
<dbReference type="PANTHER" id="PTHR11088">
    <property type="entry name" value="TRNA DIMETHYLALLYLTRANSFERASE"/>
    <property type="match status" value="1"/>
</dbReference>
<dbReference type="PANTHER" id="PTHR11088:SF60">
    <property type="entry name" value="TRNA DIMETHYLALLYLTRANSFERASE"/>
    <property type="match status" value="1"/>
</dbReference>
<dbReference type="Pfam" id="PF01715">
    <property type="entry name" value="IPPT"/>
    <property type="match status" value="1"/>
</dbReference>
<dbReference type="SUPFAM" id="SSF52540">
    <property type="entry name" value="P-loop containing nucleoside triphosphate hydrolases"/>
    <property type="match status" value="2"/>
</dbReference>
<protein>
    <recommendedName>
        <fullName evidence="1">tRNA dimethylallyltransferase</fullName>
        <ecNumber evidence="1">2.5.1.75</ecNumber>
    </recommendedName>
    <alternativeName>
        <fullName evidence="1">Dimethylallyl diphosphate:tRNA dimethylallyltransferase</fullName>
        <shortName evidence="1">DMAPP:tRNA dimethylallyltransferase</shortName>
        <shortName evidence="1">DMATase</shortName>
    </alternativeName>
    <alternativeName>
        <fullName evidence="1">Isopentenyl-diphosphate:tRNA isopentenyltransferase</fullName>
        <shortName evidence="1">IPP transferase</shortName>
        <shortName evidence="1">IPPT</shortName>
        <shortName evidence="1">IPTase</shortName>
    </alternativeName>
</protein>
<keyword id="KW-0067">ATP-binding</keyword>
<keyword id="KW-0460">Magnesium</keyword>
<keyword id="KW-0547">Nucleotide-binding</keyword>
<keyword id="KW-1185">Reference proteome</keyword>
<keyword id="KW-0808">Transferase</keyword>
<keyword id="KW-0819">tRNA processing</keyword>
<proteinExistence type="inferred from homology"/>
<sequence>MLPIAIFIIGPTASGKTNLAIKLRQKLPVEIISVDSALIYRGMDIGTAKPNHEELTQAPHRLINICDPAESYSTANFCLDALNEMTVITAAGRIPLLVGGTMLYFKSLLHGLSPLPPANVEIRTLIQREAKAVGWAALHQKLKKIDLVAANRIHPNDSYRLLRALEVFLVSGNTLTEMIQKSGNALKYQVYQFAIMPVNRSLLHDRITRRFHQMLANGFEYEVSQLFARTDLNTNMSSIRCVGYRQMWSYLAGETNYHEMIFRAISATRKLAKHQITWLKSWQNICWLDSEQQDMALNKILQMISKHIS</sequence>